<gene>
    <name evidence="5" type="primary">KIN14N</name>
    <name evidence="9" type="ordered locus">Os07g0105700</name>
    <name evidence="5" type="ordered locus">LOC_Os07g01490</name>
    <name evidence="8" type="ORF">B1317D11.110</name>
    <name evidence="10" type="ORF">OsJ_22797</name>
    <name evidence="7" type="ORF">P0446F04.141</name>
    <name evidence="6" type="ORF">P0617C02.115</name>
</gene>
<comment type="similarity">
    <text evidence="4">Belongs to the TRAFAC class myosin-kinesin ATPase superfamily. Kinesin family. KIN-14 subfamily.</text>
</comment>
<comment type="sequence caution" evidence="5">
    <conflict type="erroneous gene model prediction">
        <sequence resource="EMBL-CDS" id="BAC81180"/>
    </conflict>
</comment>
<comment type="sequence caution" evidence="5">
    <conflict type="erroneous gene model prediction">
        <sequence resource="EMBL-CDS" id="BAD31120"/>
    </conflict>
</comment>
<comment type="sequence caution" evidence="5">
    <conflict type="erroneous gene model prediction">
        <sequence resource="EMBL-CDS" id="BAD31938"/>
    </conflict>
</comment>
<comment type="sequence caution" evidence="5">
    <conflict type="erroneous gene model prediction">
        <sequence resource="EMBL-CDS" id="BAF20613"/>
    </conflict>
</comment>
<comment type="sequence caution" evidence="5">
    <conflict type="erroneous initiation">
        <sequence resource="EMBL-CDS" id="BAG88929"/>
    </conflict>
    <text>Truncated N-terminus.</text>
</comment>
<comment type="sequence caution" evidence="5">
    <conflict type="erroneous gene model prediction">
        <sequence resource="EMBL-CDS" id="BAS99708"/>
    </conflict>
</comment>
<comment type="sequence caution" evidence="5">
    <conflict type="erroneous gene model prediction">
        <sequence resource="EMBL-CDS" id="EAZ38419"/>
    </conflict>
</comment>
<sequence length="764" mass="85571">MSTRATRPGMLHQKENAADAQAGKRQRTAAGSAARAPLSANAAPPAPDPAIEFAGRDDVDALLNEKMKGKNKMDYKGKSEQMMEYIKKLRACIKWLLEREDTNLAEIGKLNGLLEAAEKHHSEIVAQLKSAIEESKAINEELQRQYASLEENLKRVEAEKLDALRSYGDEKEARIAVEASRNEHLEDLRRIKLEEKRLNDQIKMLQDTNKRLQEYNTSLQQYNSNLQADATKNGETIAKLQKEKNTMVETMNGLKDHANSVKMQLDLAKSSQNEALKQKTDLLKEVDNLRGELQQVRDDRDHKLAEIHSLLADVSTYKEMTGKSVAELDNAMTRSTALEETCSSQAERIKTLELQLASANEKLKRSDLTTMETMTEYEKQKRMLEDLQLRLEEAEQQILDGENLRKRLHNTILELKGNIRVFCRVRPLLPNESGAVAYPKSGENLGRGIELTHNAQMYSFTFDKVFEQSASQEDVFIEISQLIQSALDGYKVCIFAYGQTGSGKTYTMMGNPELHDQKGLIPRSLEQIFQTSQALISQGWKYKMQASMLEIYNEAIRDLLATNRTTVQDGGASKYSIKHDANGNTHVSDLTIVDVSSINEVSSLLKRAAQSRSVGRTQMNEESSRSHCVFTLRIFGVNEGTDQQVQGVLNLIDLAGSERLNKSGATGDRLKETQAINKSLSCLSDVIFSIAKKEEHVPFRNSKLTYLLQPCLGGDSKTLMFVNLSPEVSSTGESICSLRFAARVNSCEIGIPRRQTQVRSLAQG</sequence>
<feature type="chain" id="PRO_0000438639" description="Kinesin-like protein KIN-14N">
    <location>
        <begin position="1"/>
        <end position="764"/>
    </location>
</feature>
<feature type="domain" description="Kinesin motor" evidence="2">
    <location>
        <begin position="418"/>
        <end position="747"/>
    </location>
</feature>
<feature type="region of interest" description="Disordered" evidence="3">
    <location>
        <begin position="1"/>
        <end position="50"/>
    </location>
</feature>
<feature type="coiled-coil region" evidence="1">
    <location>
        <begin position="105"/>
        <end position="416"/>
    </location>
</feature>
<feature type="compositionally biased region" description="Low complexity" evidence="3">
    <location>
        <begin position="29"/>
        <end position="50"/>
    </location>
</feature>
<feature type="binding site" evidence="2">
    <location>
        <begin position="498"/>
        <end position="505"/>
    </location>
    <ligand>
        <name>ATP</name>
        <dbReference type="ChEBI" id="CHEBI:30616"/>
    </ligand>
</feature>
<reference key="1">
    <citation type="journal article" date="2002" name="Nature">
        <title>The genome sequence and structure of rice chromosome 1.</title>
        <authorList>
            <person name="Sasaki T."/>
            <person name="Matsumoto T."/>
            <person name="Yamamoto K."/>
            <person name="Sakata K."/>
            <person name="Baba T."/>
            <person name="Katayose Y."/>
            <person name="Wu J."/>
            <person name="Niimura Y."/>
            <person name="Cheng Z."/>
            <person name="Nagamura Y."/>
            <person name="Antonio B.A."/>
            <person name="Kanamori H."/>
            <person name="Hosokawa S."/>
            <person name="Masukawa M."/>
            <person name="Arikawa K."/>
            <person name="Chiden Y."/>
            <person name="Hayashi M."/>
            <person name="Okamoto M."/>
            <person name="Ando T."/>
            <person name="Aoki H."/>
            <person name="Arita K."/>
            <person name="Hamada M."/>
            <person name="Harada C."/>
            <person name="Hijishita S."/>
            <person name="Honda M."/>
            <person name="Ichikawa Y."/>
            <person name="Idonuma A."/>
            <person name="Iijima M."/>
            <person name="Ikeda M."/>
            <person name="Ikeno M."/>
            <person name="Ito S."/>
            <person name="Ito T."/>
            <person name="Ito Y."/>
            <person name="Ito Y."/>
            <person name="Iwabuchi A."/>
            <person name="Kamiya K."/>
            <person name="Karasawa W."/>
            <person name="Katagiri S."/>
            <person name="Kikuta A."/>
            <person name="Kobayashi N."/>
            <person name="Kono I."/>
            <person name="Machita K."/>
            <person name="Maehara T."/>
            <person name="Mizuno H."/>
            <person name="Mizubayashi T."/>
            <person name="Mukai Y."/>
            <person name="Nagasaki H."/>
            <person name="Nakashima M."/>
            <person name="Nakama Y."/>
            <person name="Nakamichi Y."/>
            <person name="Nakamura M."/>
            <person name="Namiki N."/>
            <person name="Negishi M."/>
            <person name="Ohta I."/>
            <person name="Ono N."/>
            <person name="Saji S."/>
            <person name="Sakai K."/>
            <person name="Shibata M."/>
            <person name="Shimokawa T."/>
            <person name="Shomura A."/>
            <person name="Song J."/>
            <person name="Takazaki Y."/>
            <person name="Terasawa K."/>
            <person name="Tsuji K."/>
            <person name="Waki K."/>
            <person name="Yamagata H."/>
            <person name="Yamane H."/>
            <person name="Yoshiki S."/>
            <person name="Yoshihara R."/>
            <person name="Yukawa K."/>
            <person name="Zhong H."/>
            <person name="Iwama H."/>
            <person name="Endo T."/>
            <person name="Ito H."/>
            <person name="Hahn J.H."/>
            <person name="Kim H.-I."/>
            <person name="Eun M.-Y."/>
            <person name="Yano M."/>
            <person name="Jiang J."/>
            <person name="Gojobori T."/>
        </authorList>
    </citation>
    <scope>NUCLEOTIDE SEQUENCE [LARGE SCALE GENOMIC DNA]</scope>
    <source>
        <strain>cv. Nipponbare</strain>
    </source>
</reference>
<reference key="2">
    <citation type="journal article" date="2005" name="Nature">
        <title>The map-based sequence of the rice genome.</title>
        <authorList>
            <consortium name="International rice genome sequencing project (IRGSP)"/>
        </authorList>
    </citation>
    <scope>NUCLEOTIDE SEQUENCE [LARGE SCALE GENOMIC DNA]</scope>
    <source>
        <strain>cv. Nipponbare</strain>
    </source>
</reference>
<reference key="3">
    <citation type="journal article" date="2008" name="Nucleic Acids Res.">
        <title>The rice annotation project database (RAP-DB): 2008 update.</title>
        <authorList>
            <consortium name="The rice annotation project (RAP)"/>
        </authorList>
    </citation>
    <scope>GENOME REANNOTATION</scope>
    <source>
        <strain>cv. Nipponbare</strain>
    </source>
</reference>
<reference key="4">
    <citation type="journal article" date="2013" name="Rice">
        <title>Improvement of the Oryza sativa Nipponbare reference genome using next generation sequence and optical map data.</title>
        <authorList>
            <person name="Kawahara Y."/>
            <person name="de la Bastide M."/>
            <person name="Hamilton J.P."/>
            <person name="Kanamori H."/>
            <person name="McCombie W.R."/>
            <person name="Ouyang S."/>
            <person name="Schwartz D.C."/>
            <person name="Tanaka T."/>
            <person name="Wu J."/>
            <person name="Zhou S."/>
            <person name="Childs K.L."/>
            <person name="Davidson R.M."/>
            <person name="Lin H."/>
            <person name="Quesada-Ocampo L."/>
            <person name="Vaillancourt B."/>
            <person name="Sakai H."/>
            <person name="Lee S.S."/>
            <person name="Kim J."/>
            <person name="Numa H."/>
            <person name="Itoh T."/>
            <person name="Buell C.R."/>
            <person name="Matsumoto T."/>
        </authorList>
    </citation>
    <scope>GENOME REANNOTATION</scope>
    <source>
        <strain>cv. Nipponbare</strain>
    </source>
</reference>
<reference key="5">
    <citation type="journal article" date="2005" name="PLoS Biol.">
        <title>The genomes of Oryza sativa: a history of duplications.</title>
        <authorList>
            <person name="Yu J."/>
            <person name="Wang J."/>
            <person name="Lin W."/>
            <person name="Li S."/>
            <person name="Li H."/>
            <person name="Zhou J."/>
            <person name="Ni P."/>
            <person name="Dong W."/>
            <person name="Hu S."/>
            <person name="Zeng C."/>
            <person name="Zhang J."/>
            <person name="Zhang Y."/>
            <person name="Li R."/>
            <person name="Xu Z."/>
            <person name="Li S."/>
            <person name="Li X."/>
            <person name="Zheng H."/>
            <person name="Cong L."/>
            <person name="Lin L."/>
            <person name="Yin J."/>
            <person name="Geng J."/>
            <person name="Li G."/>
            <person name="Shi J."/>
            <person name="Liu J."/>
            <person name="Lv H."/>
            <person name="Li J."/>
            <person name="Wang J."/>
            <person name="Deng Y."/>
            <person name="Ran L."/>
            <person name="Shi X."/>
            <person name="Wang X."/>
            <person name="Wu Q."/>
            <person name="Li C."/>
            <person name="Ren X."/>
            <person name="Wang J."/>
            <person name="Wang X."/>
            <person name="Li D."/>
            <person name="Liu D."/>
            <person name="Zhang X."/>
            <person name="Ji Z."/>
            <person name="Zhao W."/>
            <person name="Sun Y."/>
            <person name="Zhang Z."/>
            <person name="Bao J."/>
            <person name="Han Y."/>
            <person name="Dong L."/>
            <person name="Ji J."/>
            <person name="Chen P."/>
            <person name="Wu S."/>
            <person name="Liu J."/>
            <person name="Xiao Y."/>
            <person name="Bu D."/>
            <person name="Tan J."/>
            <person name="Yang L."/>
            <person name="Ye C."/>
            <person name="Zhang J."/>
            <person name="Xu J."/>
            <person name="Zhou Y."/>
            <person name="Yu Y."/>
            <person name="Zhang B."/>
            <person name="Zhuang S."/>
            <person name="Wei H."/>
            <person name="Liu B."/>
            <person name="Lei M."/>
            <person name="Yu H."/>
            <person name="Li Y."/>
            <person name="Xu H."/>
            <person name="Wei S."/>
            <person name="He X."/>
            <person name="Fang L."/>
            <person name="Zhang Z."/>
            <person name="Zhang Y."/>
            <person name="Huang X."/>
            <person name="Su Z."/>
            <person name="Tong W."/>
            <person name="Li J."/>
            <person name="Tong Z."/>
            <person name="Li S."/>
            <person name="Ye J."/>
            <person name="Wang L."/>
            <person name="Fang L."/>
            <person name="Lei T."/>
            <person name="Chen C.-S."/>
            <person name="Chen H.-C."/>
            <person name="Xu Z."/>
            <person name="Li H."/>
            <person name="Huang H."/>
            <person name="Zhang F."/>
            <person name="Xu H."/>
            <person name="Li N."/>
            <person name="Zhao C."/>
            <person name="Li S."/>
            <person name="Dong L."/>
            <person name="Huang Y."/>
            <person name="Li L."/>
            <person name="Xi Y."/>
            <person name="Qi Q."/>
            <person name="Li W."/>
            <person name="Zhang B."/>
            <person name="Hu W."/>
            <person name="Zhang Y."/>
            <person name="Tian X."/>
            <person name="Jiao Y."/>
            <person name="Liang X."/>
            <person name="Jin J."/>
            <person name="Gao L."/>
            <person name="Zheng W."/>
            <person name="Hao B."/>
            <person name="Liu S.-M."/>
            <person name="Wang W."/>
            <person name="Yuan L."/>
            <person name="Cao M."/>
            <person name="McDermott J."/>
            <person name="Samudrala R."/>
            <person name="Wang J."/>
            <person name="Wong G.K.-S."/>
            <person name="Yang H."/>
        </authorList>
    </citation>
    <scope>NUCLEOTIDE SEQUENCE [LARGE SCALE GENOMIC DNA]</scope>
    <source>
        <strain>cv. Nipponbare</strain>
    </source>
</reference>
<reference key="6">
    <citation type="journal article" date="2003" name="Science">
        <title>Collection, mapping, and annotation of over 28,000 cDNA clones from japonica rice.</title>
        <authorList>
            <consortium name="The rice full-length cDNA consortium"/>
        </authorList>
    </citation>
    <scope>NUCLEOTIDE SEQUENCE [LARGE SCALE MRNA] OF 342-764</scope>
    <source>
        <strain>cv. Nipponbare</strain>
    </source>
</reference>
<reference key="7">
    <citation type="journal article" date="2009" name="Ann. Bot.">
        <title>Evaluating the microtubule cytoskeleton and its interacting proteins in monocots by mining the rice genome.</title>
        <authorList>
            <person name="Guo L."/>
            <person name="Ho C.M."/>
            <person name="Kong Z."/>
            <person name="Lee Y.R."/>
            <person name="Qian Q."/>
            <person name="Liu B."/>
        </authorList>
    </citation>
    <scope>GENE FAMILY</scope>
    <scope>NOMENCLATURE</scope>
</reference>
<evidence type="ECO:0000255" key="1"/>
<evidence type="ECO:0000255" key="2">
    <source>
        <dbReference type="PROSITE-ProRule" id="PRU00283"/>
    </source>
</evidence>
<evidence type="ECO:0000256" key="3">
    <source>
        <dbReference type="SAM" id="MobiDB-lite"/>
    </source>
</evidence>
<evidence type="ECO:0000303" key="4">
    <source>
    </source>
</evidence>
<evidence type="ECO:0000305" key="5"/>
<evidence type="ECO:0000312" key="6">
    <source>
        <dbReference type="EMBL" id="BAC81180.1"/>
    </source>
</evidence>
<evidence type="ECO:0000312" key="7">
    <source>
        <dbReference type="EMBL" id="BAD31120.1"/>
    </source>
</evidence>
<evidence type="ECO:0000312" key="8">
    <source>
        <dbReference type="EMBL" id="BAD31938.1"/>
    </source>
</evidence>
<evidence type="ECO:0000312" key="9">
    <source>
        <dbReference type="EMBL" id="BAS99708.1"/>
    </source>
</evidence>
<evidence type="ECO:0000312" key="10">
    <source>
        <dbReference type="EMBL" id="EAZ38419.1"/>
    </source>
</evidence>
<organism>
    <name type="scientific">Oryza sativa subsp. japonica</name>
    <name type="common">Rice</name>
    <dbReference type="NCBI Taxonomy" id="39947"/>
    <lineage>
        <taxon>Eukaryota</taxon>
        <taxon>Viridiplantae</taxon>
        <taxon>Streptophyta</taxon>
        <taxon>Embryophyta</taxon>
        <taxon>Tracheophyta</taxon>
        <taxon>Spermatophyta</taxon>
        <taxon>Magnoliopsida</taxon>
        <taxon>Liliopsida</taxon>
        <taxon>Poales</taxon>
        <taxon>Poaceae</taxon>
        <taxon>BOP clade</taxon>
        <taxon>Oryzoideae</taxon>
        <taxon>Oryzeae</taxon>
        <taxon>Oryzinae</taxon>
        <taxon>Oryza</taxon>
        <taxon>Oryza sativa</taxon>
    </lineage>
</organism>
<keyword id="KW-0067">ATP-binding</keyword>
<keyword id="KW-0175">Coiled coil</keyword>
<keyword id="KW-0493">Microtubule</keyword>
<keyword id="KW-0505">Motor protein</keyword>
<keyword id="KW-0547">Nucleotide-binding</keyword>
<keyword id="KW-1185">Reference proteome</keyword>
<protein>
    <recommendedName>
        <fullName evidence="5">Kinesin-like protein KIN-14N</fullName>
    </recommendedName>
</protein>
<name>KN14N_ORYSJ</name>
<proteinExistence type="evidence at transcript level"/>
<accession>A3BFT0</accession>
<accession>A0A0P0X1E2</accession>
<accession>Q7XAL1</accession>
<dbReference type="EMBL" id="AP004673">
    <property type="protein sequence ID" value="BAC81180.1"/>
    <property type="status" value="ALT_SEQ"/>
    <property type="molecule type" value="Genomic_DNA"/>
</dbReference>
<dbReference type="EMBL" id="AP005187">
    <property type="protein sequence ID" value="BAD31120.1"/>
    <property type="status" value="ALT_SEQ"/>
    <property type="molecule type" value="Genomic_DNA"/>
</dbReference>
<dbReference type="EMBL" id="AP006186">
    <property type="protein sequence ID" value="BAD31938.1"/>
    <property type="status" value="ALT_SEQ"/>
    <property type="molecule type" value="Genomic_DNA"/>
</dbReference>
<dbReference type="EMBL" id="AP008213">
    <property type="protein sequence ID" value="BAF20613.1"/>
    <property type="status" value="ALT_SEQ"/>
    <property type="molecule type" value="Genomic_DNA"/>
</dbReference>
<dbReference type="EMBL" id="AP014963">
    <property type="protein sequence ID" value="BAS99708.1"/>
    <property type="status" value="ALT_SEQ"/>
    <property type="molecule type" value="Genomic_DNA"/>
</dbReference>
<dbReference type="EMBL" id="CM000144">
    <property type="protein sequence ID" value="EAZ38419.1"/>
    <property type="status" value="ALT_SEQ"/>
    <property type="molecule type" value="Genomic_DNA"/>
</dbReference>
<dbReference type="EMBL" id="AK063949">
    <property type="protein sequence ID" value="BAG88929.1"/>
    <property type="status" value="ALT_INIT"/>
    <property type="molecule type" value="mRNA"/>
</dbReference>
<dbReference type="RefSeq" id="XP_015644739.1">
    <property type="nucleotide sequence ID" value="XM_015789253.1"/>
</dbReference>
<dbReference type="SMR" id="A3BFT0"/>
<dbReference type="FunCoup" id="A3BFT0">
    <property type="interactions" value="730"/>
</dbReference>
<dbReference type="STRING" id="39947.A3BFT0"/>
<dbReference type="PaxDb" id="39947-A3BFT0"/>
<dbReference type="EnsemblPlants" id="Os07t0105700-01">
    <property type="protein sequence ID" value="Os07t0105700-01"/>
    <property type="gene ID" value="Os07g0105700"/>
</dbReference>
<dbReference type="Gramene" id="Os07t0105700-01">
    <property type="protein sequence ID" value="Os07t0105700-01"/>
    <property type="gene ID" value="Os07g0105700"/>
</dbReference>
<dbReference type="KEGG" id="dosa:Os07g0105700"/>
<dbReference type="eggNOG" id="KOG0239">
    <property type="taxonomic scope" value="Eukaryota"/>
</dbReference>
<dbReference type="InParanoid" id="A3BFT0"/>
<dbReference type="OrthoDB" id="3176171at2759"/>
<dbReference type="Proteomes" id="UP000000763">
    <property type="component" value="Chromosome 7"/>
</dbReference>
<dbReference type="Proteomes" id="UP000007752">
    <property type="component" value="Chromosome 7"/>
</dbReference>
<dbReference type="Proteomes" id="UP000059680">
    <property type="component" value="Chromosome 7"/>
</dbReference>
<dbReference type="GO" id="GO:0005737">
    <property type="term" value="C:cytoplasm"/>
    <property type="evidence" value="ECO:0000318"/>
    <property type="project" value="GO_Central"/>
</dbReference>
<dbReference type="GO" id="GO:0005871">
    <property type="term" value="C:kinesin complex"/>
    <property type="evidence" value="ECO:0000318"/>
    <property type="project" value="GO_Central"/>
</dbReference>
<dbReference type="GO" id="GO:0005874">
    <property type="term" value="C:microtubule"/>
    <property type="evidence" value="ECO:0000318"/>
    <property type="project" value="GO_Central"/>
</dbReference>
<dbReference type="GO" id="GO:0005524">
    <property type="term" value="F:ATP binding"/>
    <property type="evidence" value="ECO:0007669"/>
    <property type="project" value="UniProtKB-KW"/>
</dbReference>
<dbReference type="GO" id="GO:0016887">
    <property type="term" value="F:ATP hydrolysis activity"/>
    <property type="evidence" value="ECO:0000318"/>
    <property type="project" value="GO_Central"/>
</dbReference>
<dbReference type="GO" id="GO:0008017">
    <property type="term" value="F:microtubule binding"/>
    <property type="evidence" value="ECO:0000318"/>
    <property type="project" value="GO_Central"/>
</dbReference>
<dbReference type="GO" id="GO:0003777">
    <property type="term" value="F:microtubule motor activity"/>
    <property type="evidence" value="ECO:0000318"/>
    <property type="project" value="GO_Central"/>
</dbReference>
<dbReference type="GO" id="GO:0007018">
    <property type="term" value="P:microtubule-based movement"/>
    <property type="evidence" value="ECO:0000318"/>
    <property type="project" value="GO_Central"/>
</dbReference>
<dbReference type="GO" id="GO:0051225">
    <property type="term" value="P:spindle assembly"/>
    <property type="evidence" value="ECO:0000318"/>
    <property type="project" value="GO_Central"/>
</dbReference>
<dbReference type="CDD" id="cd01366">
    <property type="entry name" value="KISc_C_terminal"/>
    <property type="match status" value="1"/>
</dbReference>
<dbReference type="FunFam" id="3.40.850.10:FF:000048">
    <property type="entry name" value="Kinesin-like protein"/>
    <property type="match status" value="1"/>
</dbReference>
<dbReference type="Gene3D" id="3.40.850.10">
    <property type="entry name" value="Kinesin motor domain"/>
    <property type="match status" value="1"/>
</dbReference>
<dbReference type="InterPro" id="IPR027640">
    <property type="entry name" value="Kinesin-like_fam"/>
</dbReference>
<dbReference type="InterPro" id="IPR019821">
    <property type="entry name" value="Kinesin_motor_CS"/>
</dbReference>
<dbReference type="InterPro" id="IPR001752">
    <property type="entry name" value="Kinesin_motor_dom"/>
</dbReference>
<dbReference type="InterPro" id="IPR036961">
    <property type="entry name" value="Kinesin_motor_dom_sf"/>
</dbReference>
<dbReference type="InterPro" id="IPR027417">
    <property type="entry name" value="P-loop_NTPase"/>
</dbReference>
<dbReference type="PANTHER" id="PTHR47972">
    <property type="entry name" value="KINESIN-LIKE PROTEIN KLP-3"/>
    <property type="match status" value="1"/>
</dbReference>
<dbReference type="PANTHER" id="PTHR47972:SF45">
    <property type="entry name" value="PROTEIN CLARET SEGREGATIONAL"/>
    <property type="match status" value="1"/>
</dbReference>
<dbReference type="Pfam" id="PF00225">
    <property type="entry name" value="Kinesin"/>
    <property type="match status" value="1"/>
</dbReference>
<dbReference type="PRINTS" id="PR00380">
    <property type="entry name" value="KINESINHEAVY"/>
</dbReference>
<dbReference type="SMART" id="SM00129">
    <property type="entry name" value="KISc"/>
    <property type="match status" value="1"/>
</dbReference>
<dbReference type="SUPFAM" id="SSF52540">
    <property type="entry name" value="P-loop containing nucleoside triphosphate hydrolases"/>
    <property type="match status" value="1"/>
</dbReference>
<dbReference type="PROSITE" id="PS00411">
    <property type="entry name" value="KINESIN_MOTOR_1"/>
    <property type="match status" value="1"/>
</dbReference>
<dbReference type="PROSITE" id="PS50067">
    <property type="entry name" value="KINESIN_MOTOR_2"/>
    <property type="match status" value="1"/>
</dbReference>